<sequence>MLNSFKLSLQYILPKLWLTRLAGWGASKRAGWLTKLVIDLFVKYYKVDMKEAQKPDTASYRTFNEFFVRPLRDEVRPIDTDPNVLVMPADGVISQLGKIEEDKILQAKGHNYSLEALLAGNYLMADLFRNGTFVTTYLSPRDYHRVHMPCNGILREMIYVPGDLFSVNHLTAQNVPNLFARNERVICLFDTEFGPMAQILVGATIVGSIETVWAGTITPPREGIIKRWTWPAGENDGSVALLKGQEMGRFKLGSTVINLFAPGKVNLVEQLESLSVTKIGQPLAVSTETFVTPDAEPSPLPAEEIEAEHDASPLVDDKKDQV</sequence>
<organism>
    <name type="scientific">Escherichia coli O7:K1 (strain IAI39 / ExPEC)</name>
    <dbReference type="NCBI Taxonomy" id="585057"/>
    <lineage>
        <taxon>Bacteria</taxon>
        <taxon>Pseudomonadati</taxon>
        <taxon>Pseudomonadota</taxon>
        <taxon>Gammaproteobacteria</taxon>
        <taxon>Enterobacterales</taxon>
        <taxon>Enterobacteriaceae</taxon>
        <taxon>Escherichia</taxon>
    </lineage>
</organism>
<proteinExistence type="inferred from homology"/>
<comment type="function">
    <text evidence="1">Catalyzes the formation of phosphatidylethanolamine (PtdEtn) from phosphatidylserine (PtdSer).</text>
</comment>
<comment type="catalytic activity">
    <reaction evidence="1">
        <text>a 1,2-diacyl-sn-glycero-3-phospho-L-serine + H(+) = a 1,2-diacyl-sn-glycero-3-phosphoethanolamine + CO2</text>
        <dbReference type="Rhea" id="RHEA:20828"/>
        <dbReference type="ChEBI" id="CHEBI:15378"/>
        <dbReference type="ChEBI" id="CHEBI:16526"/>
        <dbReference type="ChEBI" id="CHEBI:57262"/>
        <dbReference type="ChEBI" id="CHEBI:64612"/>
        <dbReference type="EC" id="4.1.1.65"/>
    </reaction>
</comment>
<comment type="cofactor">
    <cofactor evidence="1">
        <name>pyruvate</name>
        <dbReference type="ChEBI" id="CHEBI:15361"/>
    </cofactor>
    <text evidence="1">Binds 1 pyruvoyl group covalently per subunit.</text>
</comment>
<comment type="pathway">
    <text evidence="1">Phospholipid metabolism; phosphatidylethanolamine biosynthesis; phosphatidylethanolamine from CDP-diacylglycerol: step 2/2.</text>
</comment>
<comment type="subunit">
    <text evidence="1">Heterodimer of a large membrane-associated beta subunit and a small pyruvoyl-containing alpha subunit.</text>
</comment>
<comment type="subcellular location">
    <subcellularLocation>
        <location evidence="1">Cell membrane</location>
        <topology evidence="1">Peripheral membrane protein</topology>
    </subcellularLocation>
</comment>
<comment type="PTM">
    <text evidence="1">Is synthesized initially as an inactive proenzyme. Formation of the active enzyme involves a self-maturation process in which the active site pyruvoyl group is generated from an internal serine residue via an autocatalytic post-translational modification. Two non-identical subunits are generated from the proenzyme in this reaction, and the pyruvate is formed at the N-terminus of the alpha chain, which is derived from the carboxyl end of the proenzyme. The autoendoproteolytic cleavage occurs by a canonical serine protease mechanism, in which the side chain hydroxyl group of the serine supplies its oxygen atom to form the C-terminus of the beta chain, while the remainder of the serine residue undergoes an oxidative deamination to produce ammonia and the pyruvoyl prosthetic group on the alpha chain. During this reaction, the Ser that is part of the protease active site of the proenzyme becomes the pyruvoyl prosthetic group, which constitutes an essential element of the active site of the mature decarboxylase.</text>
</comment>
<comment type="similarity">
    <text evidence="1">Belongs to the phosphatidylserine decarboxylase family. PSD-B subfamily. Prokaryotic type I sub-subfamily.</text>
</comment>
<name>PSD_ECO7I</name>
<evidence type="ECO:0000255" key="1">
    <source>
        <dbReference type="HAMAP-Rule" id="MF_00662"/>
    </source>
</evidence>
<evidence type="ECO:0000256" key="2">
    <source>
        <dbReference type="SAM" id="MobiDB-lite"/>
    </source>
</evidence>
<dbReference type="EC" id="4.1.1.65" evidence="1"/>
<dbReference type="EMBL" id="CU928164">
    <property type="protein sequence ID" value="CAR20725.1"/>
    <property type="molecule type" value="Genomic_DNA"/>
</dbReference>
<dbReference type="RefSeq" id="YP_002410489.1">
    <property type="nucleotide sequence ID" value="NC_011750.1"/>
</dbReference>
<dbReference type="SMR" id="B7NTL9"/>
<dbReference type="STRING" id="585057.ECIAI39_4625"/>
<dbReference type="KEGG" id="ect:ECIAI39_4625"/>
<dbReference type="PATRIC" id="fig|585057.6.peg.4774"/>
<dbReference type="HOGENOM" id="CLU_029061_4_1_6"/>
<dbReference type="UniPathway" id="UPA00558">
    <property type="reaction ID" value="UER00616"/>
</dbReference>
<dbReference type="Proteomes" id="UP000000749">
    <property type="component" value="Chromosome"/>
</dbReference>
<dbReference type="GO" id="GO:0005886">
    <property type="term" value="C:plasma membrane"/>
    <property type="evidence" value="ECO:0007669"/>
    <property type="project" value="UniProtKB-SubCell"/>
</dbReference>
<dbReference type="GO" id="GO:0004609">
    <property type="term" value="F:phosphatidylserine decarboxylase activity"/>
    <property type="evidence" value="ECO:0007669"/>
    <property type="project" value="UniProtKB-UniRule"/>
</dbReference>
<dbReference type="GO" id="GO:0006646">
    <property type="term" value="P:phosphatidylethanolamine biosynthetic process"/>
    <property type="evidence" value="ECO:0007669"/>
    <property type="project" value="UniProtKB-UniRule"/>
</dbReference>
<dbReference type="HAMAP" id="MF_00662">
    <property type="entry name" value="PS_decarb_PSD_B_type1"/>
    <property type="match status" value="1"/>
</dbReference>
<dbReference type="InterPro" id="IPR003817">
    <property type="entry name" value="PS_Dcarbxylase"/>
</dbReference>
<dbReference type="InterPro" id="IPR033177">
    <property type="entry name" value="PSD-B"/>
</dbReference>
<dbReference type="InterPro" id="IPR033178">
    <property type="entry name" value="PSD_type1_pro"/>
</dbReference>
<dbReference type="NCBIfam" id="TIGR00163">
    <property type="entry name" value="PS_decarb"/>
    <property type="match status" value="1"/>
</dbReference>
<dbReference type="PANTHER" id="PTHR10067">
    <property type="entry name" value="PHOSPHATIDYLSERINE DECARBOXYLASE"/>
    <property type="match status" value="1"/>
</dbReference>
<dbReference type="PANTHER" id="PTHR10067:SF6">
    <property type="entry name" value="PHOSPHATIDYLSERINE DECARBOXYLASE PROENZYME, MITOCHONDRIAL"/>
    <property type="match status" value="1"/>
</dbReference>
<dbReference type="Pfam" id="PF02666">
    <property type="entry name" value="PS_Dcarbxylase"/>
    <property type="match status" value="1"/>
</dbReference>
<accession>B7NTL9</accession>
<reference key="1">
    <citation type="journal article" date="2009" name="PLoS Genet.">
        <title>Organised genome dynamics in the Escherichia coli species results in highly diverse adaptive paths.</title>
        <authorList>
            <person name="Touchon M."/>
            <person name="Hoede C."/>
            <person name="Tenaillon O."/>
            <person name="Barbe V."/>
            <person name="Baeriswyl S."/>
            <person name="Bidet P."/>
            <person name="Bingen E."/>
            <person name="Bonacorsi S."/>
            <person name="Bouchier C."/>
            <person name="Bouvet O."/>
            <person name="Calteau A."/>
            <person name="Chiapello H."/>
            <person name="Clermont O."/>
            <person name="Cruveiller S."/>
            <person name="Danchin A."/>
            <person name="Diard M."/>
            <person name="Dossat C."/>
            <person name="Karoui M.E."/>
            <person name="Frapy E."/>
            <person name="Garry L."/>
            <person name="Ghigo J.M."/>
            <person name="Gilles A.M."/>
            <person name="Johnson J."/>
            <person name="Le Bouguenec C."/>
            <person name="Lescat M."/>
            <person name="Mangenot S."/>
            <person name="Martinez-Jehanne V."/>
            <person name="Matic I."/>
            <person name="Nassif X."/>
            <person name="Oztas S."/>
            <person name="Petit M.A."/>
            <person name="Pichon C."/>
            <person name="Rouy Z."/>
            <person name="Ruf C.S."/>
            <person name="Schneider D."/>
            <person name="Tourret J."/>
            <person name="Vacherie B."/>
            <person name="Vallenet D."/>
            <person name="Medigue C."/>
            <person name="Rocha E.P.C."/>
            <person name="Denamur E."/>
        </authorList>
    </citation>
    <scope>NUCLEOTIDE SEQUENCE [LARGE SCALE GENOMIC DNA]</scope>
    <source>
        <strain>IAI39 / ExPEC</strain>
    </source>
</reference>
<feature type="chain" id="PRO_1000131362" description="Phosphatidylserine decarboxylase beta chain" evidence="1">
    <location>
        <begin position="1"/>
        <end position="253"/>
    </location>
</feature>
<feature type="chain" id="PRO_1000131363" description="Phosphatidylserine decarboxylase alpha chain" evidence="1">
    <location>
        <begin position="254"/>
        <end position="322"/>
    </location>
</feature>
<feature type="region of interest" description="Disordered" evidence="2">
    <location>
        <begin position="292"/>
        <end position="322"/>
    </location>
</feature>
<feature type="compositionally biased region" description="Basic and acidic residues" evidence="2">
    <location>
        <begin position="308"/>
        <end position="322"/>
    </location>
</feature>
<feature type="active site" description="Charge relay system; for autoendoproteolytic cleavage activity" evidence="1">
    <location>
        <position position="90"/>
    </location>
</feature>
<feature type="active site" description="Charge relay system; for autoendoproteolytic cleavage activity" evidence="1">
    <location>
        <position position="147"/>
    </location>
</feature>
<feature type="active site" description="Charge relay system; for autoendoproteolytic cleavage activity" evidence="1">
    <location>
        <position position="254"/>
    </location>
</feature>
<feature type="active site" description="Schiff-base intermediate with substrate; via pyruvic acid; for decarboxylase activity" evidence="1">
    <location>
        <position position="254"/>
    </location>
</feature>
<feature type="site" description="Cleavage (non-hydrolytic); by autocatalysis" evidence="1">
    <location>
        <begin position="253"/>
        <end position="254"/>
    </location>
</feature>
<feature type="modified residue" description="Pyruvic acid (Ser); by autocatalysis" evidence="1">
    <location>
        <position position="254"/>
    </location>
</feature>
<keyword id="KW-1003">Cell membrane</keyword>
<keyword id="KW-0210">Decarboxylase</keyword>
<keyword id="KW-0444">Lipid biosynthesis</keyword>
<keyword id="KW-0443">Lipid metabolism</keyword>
<keyword id="KW-0456">Lyase</keyword>
<keyword id="KW-0472">Membrane</keyword>
<keyword id="KW-0594">Phospholipid biosynthesis</keyword>
<keyword id="KW-1208">Phospholipid metabolism</keyword>
<keyword id="KW-0670">Pyruvate</keyword>
<keyword id="KW-0865">Zymogen</keyword>
<gene>
    <name evidence="1" type="primary">psd</name>
    <name type="ordered locus">ECIAI39_4625</name>
</gene>
<protein>
    <recommendedName>
        <fullName evidence="1">Phosphatidylserine decarboxylase proenzyme</fullName>
        <ecNumber evidence="1">4.1.1.65</ecNumber>
    </recommendedName>
    <component>
        <recommendedName>
            <fullName evidence="1">Phosphatidylserine decarboxylase alpha chain</fullName>
        </recommendedName>
    </component>
    <component>
        <recommendedName>
            <fullName evidence="1">Phosphatidylserine decarboxylase beta chain</fullName>
        </recommendedName>
    </component>
</protein>